<keyword id="KW-0106">Calcium</keyword>
<keyword id="KW-0131">Cell cycle</keyword>
<keyword id="KW-0132">Cell division</keyword>
<keyword id="KW-0479">Metal-binding</keyword>
<keyword id="KW-0505">Motor protein</keyword>
<keyword id="KW-0518">Myosin</keyword>
<keyword id="KW-1185">Reference proteome</keyword>
<keyword id="KW-0677">Repeat</keyword>
<evidence type="ECO:0000255" key="1">
    <source>
        <dbReference type="PROSITE-ProRule" id="PRU00448"/>
    </source>
</evidence>
<evidence type="ECO:0000269" key="2">
    <source>
    </source>
</evidence>
<evidence type="ECO:0000269" key="3">
    <source>
    </source>
</evidence>
<evidence type="ECO:0000269" key="4">
    <source>
    </source>
</evidence>
<evidence type="ECO:0000305" key="5"/>
<comment type="function">
    <text evidence="4">Regulatory light chain for the class II conventional myosin MYO1. May play a role in the disassembly of the MYO1 ring at the bud neck at the end of its contraction during cytokinesis.</text>
</comment>
<comment type="subunit">
    <text evidence="4">Interacts with the IQ domain of MYO1.</text>
</comment>
<comment type="interaction">
    <interactant intactId="EBI-10999">
        <id>Q06580</id>
    </interactant>
    <interactant intactId="EBI-11650">
        <id>P08964</id>
        <label>MYO1</label>
    </interactant>
    <organismsDiffer>false</organismsDiffer>
    <experiments>4</experiments>
</comment>
<comment type="subcellular location">
    <subcellularLocation>
        <location evidence="2 4">Bud neck</location>
    </subcellularLocation>
    <text>Forms a ring at the bud neck in a MYO1-dependent manner.</text>
</comment>
<comment type="miscellaneous">
    <text evidence="3">Present with 1127 molecules/cell in log phase SD medium.</text>
</comment>
<comment type="miscellaneous">
    <text evidence="5">This chain binds calcium.</text>
</comment>
<protein>
    <recommendedName>
        <fullName>Myosin light chain 2</fullName>
    </recommendedName>
    <alternativeName>
        <fullName>Calmodulin-like myosin light chain MLC2</fullName>
    </alternativeName>
    <alternativeName>
        <fullName>MYO1 light chain 2</fullName>
    </alternativeName>
    <alternativeName>
        <fullName>Myosin-1 light chain</fullName>
    </alternativeName>
</protein>
<accession>Q06580</accession>
<accession>D6W4I8</accession>
<name>MLC2_YEAST</name>
<reference key="1">
    <citation type="journal article" date="1997" name="Nature">
        <title>The nucleotide sequence of Saccharomyces cerevisiae chromosome XVI.</title>
        <authorList>
            <person name="Bussey H."/>
            <person name="Storms R.K."/>
            <person name="Ahmed A."/>
            <person name="Albermann K."/>
            <person name="Allen E."/>
            <person name="Ansorge W."/>
            <person name="Araujo R."/>
            <person name="Aparicio A."/>
            <person name="Barrell B.G."/>
            <person name="Badcock K."/>
            <person name="Benes V."/>
            <person name="Botstein D."/>
            <person name="Bowman S."/>
            <person name="Brueckner M."/>
            <person name="Carpenter J."/>
            <person name="Cherry J.M."/>
            <person name="Chung E."/>
            <person name="Churcher C.M."/>
            <person name="Coster F."/>
            <person name="Davis K."/>
            <person name="Davis R.W."/>
            <person name="Dietrich F.S."/>
            <person name="Delius H."/>
            <person name="DiPaolo T."/>
            <person name="Dubois E."/>
            <person name="Duesterhoeft A."/>
            <person name="Duncan M."/>
            <person name="Floeth M."/>
            <person name="Fortin N."/>
            <person name="Friesen J.D."/>
            <person name="Fritz C."/>
            <person name="Goffeau A."/>
            <person name="Hall J."/>
            <person name="Hebling U."/>
            <person name="Heumann K."/>
            <person name="Hilbert H."/>
            <person name="Hillier L.W."/>
            <person name="Hunicke-Smith S."/>
            <person name="Hyman R.W."/>
            <person name="Johnston M."/>
            <person name="Kalman S."/>
            <person name="Kleine K."/>
            <person name="Komp C."/>
            <person name="Kurdi O."/>
            <person name="Lashkari D."/>
            <person name="Lew H."/>
            <person name="Lin A."/>
            <person name="Lin D."/>
            <person name="Louis E.J."/>
            <person name="Marathe R."/>
            <person name="Messenguy F."/>
            <person name="Mewes H.-W."/>
            <person name="Mirtipati S."/>
            <person name="Moestl D."/>
            <person name="Mueller-Auer S."/>
            <person name="Namath A."/>
            <person name="Nentwich U."/>
            <person name="Oefner P."/>
            <person name="Pearson D."/>
            <person name="Petel F.X."/>
            <person name="Pohl T.M."/>
            <person name="Purnelle B."/>
            <person name="Rajandream M.A."/>
            <person name="Rechmann S."/>
            <person name="Rieger M."/>
            <person name="Riles L."/>
            <person name="Roberts D."/>
            <person name="Schaefer M."/>
            <person name="Scharfe M."/>
            <person name="Scherens B."/>
            <person name="Schramm S."/>
            <person name="Schroeder M."/>
            <person name="Sdicu A.-M."/>
            <person name="Tettelin H."/>
            <person name="Urrestarazu L.A."/>
            <person name="Ushinsky S."/>
            <person name="Vierendeels F."/>
            <person name="Vissers S."/>
            <person name="Voss H."/>
            <person name="Walsh S.V."/>
            <person name="Wambutt R."/>
            <person name="Wang Y."/>
            <person name="Wedler E."/>
            <person name="Wedler H."/>
            <person name="Winnett E."/>
            <person name="Zhong W.-W."/>
            <person name="Zollner A."/>
            <person name="Vo D.H."/>
            <person name="Hani J."/>
        </authorList>
    </citation>
    <scope>NUCLEOTIDE SEQUENCE [LARGE SCALE GENOMIC DNA]</scope>
    <source>
        <strain>ATCC 204508 / S288c</strain>
    </source>
</reference>
<reference key="2">
    <citation type="journal article" date="2014" name="G3 (Bethesda)">
        <title>The reference genome sequence of Saccharomyces cerevisiae: Then and now.</title>
        <authorList>
            <person name="Engel S.R."/>
            <person name="Dietrich F.S."/>
            <person name="Fisk D.G."/>
            <person name="Binkley G."/>
            <person name="Balakrishnan R."/>
            <person name="Costanzo M.C."/>
            <person name="Dwight S.S."/>
            <person name="Hitz B.C."/>
            <person name="Karra K."/>
            <person name="Nash R.S."/>
            <person name="Weng S."/>
            <person name="Wong E.D."/>
            <person name="Lloyd P."/>
            <person name="Skrzypek M.S."/>
            <person name="Miyasato S.R."/>
            <person name="Simison M."/>
            <person name="Cherry J.M."/>
        </authorList>
    </citation>
    <scope>GENOME REANNOTATION</scope>
    <source>
        <strain>ATCC 204508 / S288c</strain>
    </source>
</reference>
<reference key="3">
    <citation type="journal article" date="2007" name="Genome Res.">
        <title>Approaching a complete repository of sequence-verified protein-encoding clones for Saccharomyces cerevisiae.</title>
        <authorList>
            <person name="Hu Y."/>
            <person name="Rolfs A."/>
            <person name="Bhullar B."/>
            <person name="Murthy T.V.S."/>
            <person name="Zhu C."/>
            <person name="Berger M.F."/>
            <person name="Camargo A.A."/>
            <person name="Kelley F."/>
            <person name="McCarron S."/>
            <person name="Jepson D."/>
            <person name="Richardson A."/>
            <person name="Raphael J."/>
            <person name="Moreira D."/>
            <person name="Taycher E."/>
            <person name="Zuo D."/>
            <person name="Mohr S."/>
            <person name="Kane M.F."/>
            <person name="Williamson J."/>
            <person name="Simpson A.J.G."/>
            <person name="Bulyk M.L."/>
            <person name="Harlow E."/>
            <person name="Marsischky G."/>
            <person name="Kolodner R.D."/>
            <person name="LaBaer J."/>
        </authorList>
    </citation>
    <scope>NUCLEOTIDE SEQUENCE [GENOMIC DNA]</scope>
    <source>
        <strain>ATCC 204508 / S288c</strain>
    </source>
</reference>
<reference key="4">
    <citation type="journal article" date="2004" name="J. Cell Biol.">
        <title>Identification and functional analysis of the essential and regulatory light chains of the only type II myosin Myo1p in Saccharomyces cerevisiae.</title>
        <authorList>
            <person name="Luo J."/>
            <person name="Vallen E.A."/>
            <person name="Dravis C."/>
            <person name="Tcheperegine S.E."/>
            <person name="Drees B."/>
            <person name="Bi E."/>
        </authorList>
    </citation>
    <scope>FUNCTION</scope>
    <scope>SUBCELLULAR LOCATION</scope>
    <scope>INTERACTION WITH MYO1</scope>
</reference>
<reference key="5">
    <citation type="journal article" date="2003" name="Nature">
        <title>Global analysis of protein localization in budding yeast.</title>
        <authorList>
            <person name="Huh W.-K."/>
            <person name="Falvo J.V."/>
            <person name="Gerke L.C."/>
            <person name="Carroll A.S."/>
            <person name="Howson R.W."/>
            <person name="Weissman J.S."/>
            <person name="O'Shea E.K."/>
        </authorList>
    </citation>
    <scope>SUBCELLULAR LOCATION [LARGE SCALE ANALYSIS]</scope>
</reference>
<reference key="6">
    <citation type="journal article" date="2003" name="Nature">
        <title>Global analysis of protein expression in yeast.</title>
        <authorList>
            <person name="Ghaemmaghami S."/>
            <person name="Huh W.-K."/>
            <person name="Bower K."/>
            <person name="Howson R.W."/>
            <person name="Belle A."/>
            <person name="Dephoure N."/>
            <person name="O'Shea E.K."/>
            <person name="Weissman J.S."/>
        </authorList>
    </citation>
    <scope>LEVEL OF PROTEIN EXPRESSION [LARGE SCALE ANALYSIS]</scope>
</reference>
<organism>
    <name type="scientific">Saccharomyces cerevisiae (strain ATCC 204508 / S288c)</name>
    <name type="common">Baker's yeast</name>
    <dbReference type="NCBI Taxonomy" id="559292"/>
    <lineage>
        <taxon>Eukaryota</taxon>
        <taxon>Fungi</taxon>
        <taxon>Dikarya</taxon>
        <taxon>Ascomycota</taxon>
        <taxon>Saccharomycotina</taxon>
        <taxon>Saccharomycetes</taxon>
        <taxon>Saccharomycetales</taxon>
        <taxon>Saccharomycetaceae</taxon>
        <taxon>Saccharomyces</taxon>
    </lineage>
</organism>
<sequence>MDHSESLTFNQLTQDYINKLKDAFQMLDEDEDGLISRGDLTKIYATLGKTLTDEEWSKMVPDNDTSTAEVGEEGVSFPIFLSIMGKNLSQFPEREELEESLKAIGRGHDLNVPLNEVIDSLKEAGFENPEEEFAKLFKLFTTNQQATEERTFRGKLFLDSITD</sequence>
<gene>
    <name type="primary">MLC2</name>
    <name type="ordered locus">YPR188C</name>
    <name type="ORF">P9677.10</name>
</gene>
<feature type="chain" id="PRO_0000198766" description="Myosin light chain 2">
    <location>
        <begin position="1"/>
        <end position="163"/>
    </location>
</feature>
<feature type="domain" description="EF-hand 1" evidence="1">
    <location>
        <begin position="15"/>
        <end position="50"/>
    </location>
</feature>
<feature type="domain" description="EF-hand 2" evidence="1">
    <location>
        <begin position="92"/>
        <end position="127"/>
    </location>
</feature>
<feature type="binding site" evidence="1">
    <location>
        <position position="28"/>
    </location>
    <ligand>
        <name>Ca(2+)</name>
        <dbReference type="ChEBI" id="CHEBI:29108"/>
    </ligand>
</feature>
<feature type="binding site" evidence="1">
    <location>
        <position position="30"/>
    </location>
    <ligand>
        <name>Ca(2+)</name>
        <dbReference type="ChEBI" id="CHEBI:29108"/>
    </ligand>
</feature>
<feature type="binding site" evidence="1">
    <location>
        <position position="32"/>
    </location>
    <ligand>
        <name>Ca(2+)</name>
        <dbReference type="ChEBI" id="CHEBI:29108"/>
    </ligand>
</feature>
<feature type="binding site" evidence="1">
    <location>
        <position position="39"/>
    </location>
    <ligand>
        <name>Ca(2+)</name>
        <dbReference type="ChEBI" id="CHEBI:29108"/>
    </ligand>
</feature>
<proteinExistence type="evidence at protein level"/>
<dbReference type="EMBL" id="U25841">
    <property type="protein sequence ID" value="AAB64617.1"/>
    <property type="molecule type" value="Genomic_DNA"/>
</dbReference>
<dbReference type="EMBL" id="AY558057">
    <property type="protein sequence ID" value="AAS56383.1"/>
    <property type="molecule type" value="Genomic_DNA"/>
</dbReference>
<dbReference type="EMBL" id="BK006949">
    <property type="protein sequence ID" value="DAA11604.1"/>
    <property type="molecule type" value="Genomic_DNA"/>
</dbReference>
<dbReference type="PIR" id="S58818">
    <property type="entry name" value="S58818"/>
</dbReference>
<dbReference type="RefSeq" id="NP_015514.1">
    <property type="nucleotide sequence ID" value="NM_001184285.1"/>
</dbReference>
<dbReference type="SMR" id="Q06580"/>
<dbReference type="BioGRID" id="36360">
    <property type="interactions" value="45"/>
</dbReference>
<dbReference type="ComplexPortal" id="CPX-1426">
    <property type="entry name" value="Myosin class II complex"/>
</dbReference>
<dbReference type="DIP" id="DIP-2767N"/>
<dbReference type="FunCoup" id="Q06580">
    <property type="interactions" value="47"/>
</dbReference>
<dbReference type="IntAct" id="Q06580">
    <property type="interactions" value="8"/>
</dbReference>
<dbReference type="MINT" id="Q06580"/>
<dbReference type="STRING" id="4932.YPR188C"/>
<dbReference type="iPTMnet" id="Q06580"/>
<dbReference type="PaxDb" id="4932-YPR188C"/>
<dbReference type="PeptideAtlas" id="Q06580"/>
<dbReference type="EnsemblFungi" id="YPR188C_mRNA">
    <property type="protein sequence ID" value="YPR188C"/>
    <property type="gene ID" value="YPR188C"/>
</dbReference>
<dbReference type="GeneID" id="856318"/>
<dbReference type="KEGG" id="sce:YPR188C"/>
<dbReference type="AGR" id="SGD:S000006392"/>
<dbReference type="SGD" id="S000006392">
    <property type="gene designation" value="MLC2"/>
</dbReference>
<dbReference type="VEuPathDB" id="FungiDB:YPR188C"/>
<dbReference type="eggNOG" id="KOG0027">
    <property type="taxonomic scope" value="Eukaryota"/>
</dbReference>
<dbReference type="HOGENOM" id="CLU_061288_9_2_1"/>
<dbReference type="InParanoid" id="Q06580"/>
<dbReference type="OMA" id="DAFQMID"/>
<dbReference type="OrthoDB" id="429467at2759"/>
<dbReference type="BioCyc" id="YEAST:G3O-34311-MONOMER"/>
<dbReference type="Reactome" id="R-SCE-5627123">
    <property type="pathway name" value="RHO GTPases activate PAKs"/>
</dbReference>
<dbReference type="BioGRID-ORCS" id="856318">
    <property type="hits" value="1 hit in 10 CRISPR screens"/>
</dbReference>
<dbReference type="PRO" id="PR:Q06580"/>
<dbReference type="Proteomes" id="UP000002311">
    <property type="component" value="Chromosome XVI"/>
</dbReference>
<dbReference type="RNAct" id="Q06580">
    <property type="molecule type" value="protein"/>
</dbReference>
<dbReference type="GO" id="GO:0005935">
    <property type="term" value="C:cellular bud neck"/>
    <property type="evidence" value="ECO:0000303"/>
    <property type="project" value="ComplexPortal"/>
</dbReference>
<dbReference type="GO" id="GO:0000142">
    <property type="term" value="C:cellular bud neck contractile ring"/>
    <property type="evidence" value="ECO:0000314"/>
    <property type="project" value="SGD"/>
</dbReference>
<dbReference type="GO" id="GO:0005737">
    <property type="term" value="C:cytoplasm"/>
    <property type="evidence" value="ECO:0000318"/>
    <property type="project" value="GO_Central"/>
</dbReference>
<dbReference type="GO" id="GO:0000131">
    <property type="term" value="C:incipient cellular bud site"/>
    <property type="evidence" value="ECO:0000314"/>
    <property type="project" value="SGD"/>
</dbReference>
<dbReference type="GO" id="GO:0016460">
    <property type="term" value="C:myosin II complex"/>
    <property type="evidence" value="ECO:0000353"/>
    <property type="project" value="SGD"/>
</dbReference>
<dbReference type="GO" id="GO:0005509">
    <property type="term" value="F:calcium ion binding"/>
    <property type="evidence" value="ECO:0007669"/>
    <property type="project" value="InterPro"/>
</dbReference>
<dbReference type="GO" id="GO:0140659">
    <property type="term" value="F:cytoskeletal motor regulator activity"/>
    <property type="evidence" value="ECO:0000318"/>
    <property type="project" value="GO_Central"/>
</dbReference>
<dbReference type="GO" id="GO:0032036">
    <property type="term" value="F:myosin heavy chain binding"/>
    <property type="evidence" value="ECO:0000318"/>
    <property type="project" value="GO_Central"/>
</dbReference>
<dbReference type="GO" id="GO:0032038">
    <property type="term" value="F:myosin II heavy chain binding"/>
    <property type="evidence" value="ECO:0000353"/>
    <property type="project" value="SGD"/>
</dbReference>
<dbReference type="GO" id="GO:0031032">
    <property type="term" value="P:actomyosin structure organization"/>
    <property type="evidence" value="ECO:0000318"/>
    <property type="project" value="GO_Central"/>
</dbReference>
<dbReference type="GO" id="GO:1902404">
    <property type="term" value="P:mitotic actomyosin contractile ring contraction"/>
    <property type="evidence" value="ECO:0000315"/>
    <property type="project" value="SGD"/>
</dbReference>
<dbReference type="GO" id="GO:0000281">
    <property type="term" value="P:mitotic cytokinesis"/>
    <property type="evidence" value="ECO:0000318"/>
    <property type="project" value="GO_Central"/>
</dbReference>
<dbReference type="GO" id="GO:0000920">
    <property type="term" value="P:septum digestion after cytokinesis"/>
    <property type="evidence" value="ECO:0000303"/>
    <property type="project" value="ComplexPortal"/>
</dbReference>
<dbReference type="FunFam" id="1.10.238.10:FF:000496">
    <property type="entry name" value="Light chain for Myo1p"/>
    <property type="match status" value="1"/>
</dbReference>
<dbReference type="Gene3D" id="1.10.238.10">
    <property type="entry name" value="EF-hand"/>
    <property type="match status" value="1"/>
</dbReference>
<dbReference type="InterPro" id="IPR011992">
    <property type="entry name" value="EF-hand-dom_pair"/>
</dbReference>
<dbReference type="InterPro" id="IPR018247">
    <property type="entry name" value="EF_Hand_1_Ca_BS"/>
</dbReference>
<dbReference type="InterPro" id="IPR002048">
    <property type="entry name" value="EF_hand_dom"/>
</dbReference>
<dbReference type="InterPro" id="IPR050403">
    <property type="entry name" value="Myosin_RLC"/>
</dbReference>
<dbReference type="PANTHER" id="PTHR23049">
    <property type="entry name" value="MYOSIN REGULATORY LIGHT CHAIN 2"/>
    <property type="match status" value="1"/>
</dbReference>
<dbReference type="SUPFAM" id="SSF47473">
    <property type="entry name" value="EF-hand"/>
    <property type="match status" value="1"/>
</dbReference>
<dbReference type="PROSITE" id="PS00018">
    <property type="entry name" value="EF_HAND_1"/>
    <property type="match status" value="1"/>
</dbReference>
<dbReference type="PROSITE" id="PS50222">
    <property type="entry name" value="EF_HAND_2"/>
    <property type="match status" value="2"/>
</dbReference>